<comment type="function">
    <text evidence="2">Component of the ubiquinol-cytochrome c reductase complex (complex III or cytochrome b-c1 complex) that is part of the mitochondrial respiratory chain. The b-c1 complex mediates electron transfer from ubiquinol to cytochrome c. Contributes to the generation of a proton gradient across the mitochondrial membrane that is then used for ATP synthesis.</text>
</comment>
<comment type="cofactor">
    <cofactor evidence="2">
        <name>heme b</name>
        <dbReference type="ChEBI" id="CHEBI:60344"/>
    </cofactor>
    <text evidence="2">Binds 2 heme b groups non-covalently.</text>
</comment>
<comment type="subunit">
    <text evidence="2">The cytochrome bc1 complex contains 11 subunits: 3 respiratory subunits (MT-CYB, CYC1 and UQCRFS1), 2 core proteins (UQCRC1 and UQCRC2) and 6 low-molecular weight proteins (UQCRH/QCR6, UQCRB/QCR7, UQCRQ/QCR8, UQCR10/QCR9, UQCR11/QCR10 and a cleavage product of UQCRFS1). This cytochrome bc1 complex then forms a dimer.</text>
</comment>
<comment type="subcellular location">
    <subcellularLocation>
        <location evidence="2">Mitochondrion inner membrane</location>
        <topology evidence="2">Multi-pass membrane protein</topology>
    </subcellularLocation>
</comment>
<comment type="miscellaneous">
    <text evidence="1">Heme 1 (or BL or b562) is low-potential and absorbs at about 562 nm, and heme 2 (or BH or b566) is high-potential and absorbs at about 566 nm.</text>
</comment>
<comment type="similarity">
    <text evidence="3 4">Belongs to the cytochrome b family.</text>
</comment>
<comment type="caution">
    <text evidence="2">The full-length protein contains only eight transmembrane helices, not nine as predicted by bioinformatics tools.</text>
</comment>
<proteinExistence type="inferred from homology"/>
<evidence type="ECO:0000250" key="1"/>
<evidence type="ECO:0000250" key="2">
    <source>
        <dbReference type="UniProtKB" id="P00157"/>
    </source>
</evidence>
<evidence type="ECO:0000255" key="3">
    <source>
        <dbReference type="PROSITE-ProRule" id="PRU00967"/>
    </source>
</evidence>
<evidence type="ECO:0000255" key="4">
    <source>
        <dbReference type="PROSITE-ProRule" id="PRU00968"/>
    </source>
</evidence>
<sequence>MTNIRKTHPLIKIVNHSFIDLPXPSNISAWWNFGSLLGFCLIVQIVTGLFLAMHYTSDTMTAFSSVTHICRDVNYGWLIRYMHANGASMFFICLFLHVGRGLYYGSYTYFETWNIGVILLFAVMATAFMGYVLPWGQMSFWGATVITNLLSAIPYIGTTLVEWIWGGFSVDKATLTRFFAFHFILPFIIAALAMIHLLFLHETGSNNPSGLISDSDKIPFHPYFSIKDTLGFLILILIFMTLVLFTPDLLGDPDNYTPANPLNTPPHIKPEWYFLFAYAILRSIPNKLGGVLALVFSILILMLFPILHMSKQRSMMFRPLSQCLFWILVADLFTLTWIGGQPVEHPFITIGQVASILYFTIILILLPLISLLENKLLKW</sequence>
<geneLocation type="mitochondrion"/>
<accession>Q9TF34</accession>
<gene>
    <name type="primary">MT-CYB</name>
    <name type="synonym">COB</name>
    <name type="synonym">CYTB</name>
    <name type="synonym">MTCYB</name>
</gene>
<feature type="chain" id="PRO_0000061003" description="Cytochrome b">
    <location>
        <begin position="1"/>
        <end position="379"/>
    </location>
</feature>
<feature type="transmembrane region" description="Helical" evidence="2">
    <location>
        <begin position="33"/>
        <end position="53"/>
    </location>
</feature>
<feature type="transmembrane region" description="Helical" evidence="2">
    <location>
        <begin position="77"/>
        <end position="98"/>
    </location>
</feature>
<feature type="transmembrane region" description="Helical" evidence="2">
    <location>
        <begin position="113"/>
        <end position="133"/>
    </location>
</feature>
<feature type="transmembrane region" description="Helical" evidence="2">
    <location>
        <begin position="178"/>
        <end position="198"/>
    </location>
</feature>
<feature type="transmembrane region" description="Helical" evidence="2">
    <location>
        <begin position="226"/>
        <end position="246"/>
    </location>
</feature>
<feature type="transmembrane region" description="Helical" evidence="2">
    <location>
        <begin position="288"/>
        <end position="308"/>
    </location>
</feature>
<feature type="transmembrane region" description="Helical" evidence="2">
    <location>
        <begin position="320"/>
        <end position="340"/>
    </location>
</feature>
<feature type="transmembrane region" description="Helical" evidence="2">
    <location>
        <begin position="347"/>
        <end position="367"/>
    </location>
</feature>
<feature type="binding site" description="axial binding residue" evidence="2">
    <location>
        <position position="83"/>
    </location>
    <ligand>
        <name>heme b</name>
        <dbReference type="ChEBI" id="CHEBI:60344"/>
        <label>b562</label>
    </ligand>
    <ligandPart>
        <name>Fe</name>
        <dbReference type="ChEBI" id="CHEBI:18248"/>
    </ligandPart>
</feature>
<feature type="binding site" description="axial binding residue" evidence="2">
    <location>
        <position position="97"/>
    </location>
    <ligand>
        <name>heme b</name>
        <dbReference type="ChEBI" id="CHEBI:60344"/>
        <label>b566</label>
    </ligand>
    <ligandPart>
        <name>Fe</name>
        <dbReference type="ChEBI" id="CHEBI:18248"/>
    </ligandPart>
</feature>
<feature type="binding site" description="axial binding residue" evidence="2">
    <location>
        <position position="182"/>
    </location>
    <ligand>
        <name>heme b</name>
        <dbReference type="ChEBI" id="CHEBI:60344"/>
        <label>b562</label>
    </ligand>
    <ligandPart>
        <name>Fe</name>
        <dbReference type="ChEBI" id="CHEBI:18248"/>
    </ligandPart>
</feature>
<feature type="binding site" description="axial binding residue" evidence="2">
    <location>
        <position position="196"/>
    </location>
    <ligand>
        <name>heme b</name>
        <dbReference type="ChEBI" id="CHEBI:60344"/>
        <label>b566</label>
    </ligand>
    <ligandPart>
        <name>Fe</name>
        <dbReference type="ChEBI" id="CHEBI:18248"/>
    </ligandPart>
</feature>
<feature type="binding site" evidence="2">
    <location>
        <position position="201"/>
    </location>
    <ligand>
        <name>a ubiquinone</name>
        <dbReference type="ChEBI" id="CHEBI:16389"/>
    </ligand>
</feature>
<name>CYB_GLAVO</name>
<protein>
    <recommendedName>
        <fullName>Cytochrome b</fullName>
    </recommendedName>
    <alternativeName>
        <fullName>Complex III subunit 3</fullName>
    </alternativeName>
    <alternativeName>
        <fullName>Complex III subunit III</fullName>
    </alternativeName>
    <alternativeName>
        <fullName>Cytochrome b-c1 complex subunit 3</fullName>
    </alternativeName>
    <alternativeName>
        <fullName>Ubiquinol-cytochrome-c reductase complex cytochrome b subunit</fullName>
    </alternativeName>
</protein>
<dbReference type="EMBL" id="AF157921">
    <property type="protein sequence ID" value="AAD50205.1"/>
    <property type="molecule type" value="Genomic_DNA"/>
</dbReference>
<dbReference type="GO" id="GO:0005743">
    <property type="term" value="C:mitochondrial inner membrane"/>
    <property type="evidence" value="ECO:0007669"/>
    <property type="project" value="UniProtKB-SubCell"/>
</dbReference>
<dbReference type="GO" id="GO:0045275">
    <property type="term" value="C:respiratory chain complex III"/>
    <property type="evidence" value="ECO:0007669"/>
    <property type="project" value="InterPro"/>
</dbReference>
<dbReference type="GO" id="GO:0046872">
    <property type="term" value="F:metal ion binding"/>
    <property type="evidence" value="ECO:0007669"/>
    <property type="project" value="UniProtKB-KW"/>
</dbReference>
<dbReference type="GO" id="GO:0008121">
    <property type="term" value="F:ubiquinol-cytochrome-c reductase activity"/>
    <property type="evidence" value="ECO:0007669"/>
    <property type="project" value="InterPro"/>
</dbReference>
<dbReference type="GO" id="GO:0006122">
    <property type="term" value="P:mitochondrial electron transport, ubiquinol to cytochrome c"/>
    <property type="evidence" value="ECO:0007669"/>
    <property type="project" value="TreeGrafter"/>
</dbReference>
<dbReference type="CDD" id="cd00290">
    <property type="entry name" value="cytochrome_b_C"/>
    <property type="match status" value="1"/>
</dbReference>
<dbReference type="CDD" id="cd00284">
    <property type="entry name" value="Cytochrome_b_N"/>
    <property type="match status" value="1"/>
</dbReference>
<dbReference type="FunFam" id="1.20.810.10:FF:000002">
    <property type="entry name" value="Cytochrome b"/>
    <property type="match status" value="1"/>
</dbReference>
<dbReference type="Gene3D" id="1.20.810.10">
    <property type="entry name" value="Cytochrome Bc1 Complex, Chain C"/>
    <property type="match status" value="1"/>
</dbReference>
<dbReference type="InterPro" id="IPR005798">
    <property type="entry name" value="Cyt_b/b6_C"/>
</dbReference>
<dbReference type="InterPro" id="IPR036150">
    <property type="entry name" value="Cyt_b/b6_C_sf"/>
</dbReference>
<dbReference type="InterPro" id="IPR005797">
    <property type="entry name" value="Cyt_b/b6_N"/>
</dbReference>
<dbReference type="InterPro" id="IPR027387">
    <property type="entry name" value="Cytb/b6-like_sf"/>
</dbReference>
<dbReference type="InterPro" id="IPR030689">
    <property type="entry name" value="Cytochrome_b"/>
</dbReference>
<dbReference type="InterPro" id="IPR048260">
    <property type="entry name" value="Cytochrome_b_C_euk/bac"/>
</dbReference>
<dbReference type="InterPro" id="IPR048259">
    <property type="entry name" value="Cytochrome_b_N_euk/bac"/>
</dbReference>
<dbReference type="InterPro" id="IPR016174">
    <property type="entry name" value="Di-haem_cyt_TM"/>
</dbReference>
<dbReference type="PANTHER" id="PTHR19271">
    <property type="entry name" value="CYTOCHROME B"/>
    <property type="match status" value="1"/>
</dbReference>
<dbReference type="PANTHER" id="PTHR19271:SF16">
    <property type="entry name" value="CYTOCHROME B"/>
    <property type="match status" value="1"/>
</dbReference>
<dbReference type="Pfam" id="PF00032">
    <property type="entry name" value="Cytochrom_B_C"/>
    <property type="match status" value="1"/>
</dbReference>
<dbReference type="Pfam" id="PF00033">
    <property type="entry name" value="Cytochrome_B"/>
    <property type="match status" value="1"/>
</dbReference>
<dbReference type="PIRSF" id="PIRSF038885">
    <property type="entry name" value="COB"/>
    <property type="match status" value="1"/>
</dbReference>
<dbReference type="SUPFAM" id="SSF81648">
    <property type="entry name" value="a domain/subunit of cytochrome bc1 complex (Ubiquinol-cytochrome c reductase)"/>
    <property type="match status" value="1"/>
</dbReference>
<dbReference type="SUPFAM" id="SSF81342">
    <property type="entry name" value="Transmembrane di-heme cytochromes"/>
    <property type="match status" value="1"/>
</dbReference>
<dbReference type="PROSITE" id="PS51003">
    <property type="entry name" value="CYTB_CTER"/>
    <property type="match status" value="1"/>
</dbReference>
<dbReference type="PROSITE" id="PS51002">
    <property type="entry name" value="CYTB_NTER"/>
    <property type="match status" value="1"/>
</dbReference>
<organism>
    <name type="scientific">Glaucomys volans</name>
    <name type="common">Southern flying squirrel</name>
    <dbReference type="NCBI Taxonomy" id="64683"/>
    <lineage>
        <taxon>Eukaryota</taxon>
        <taxon>Metazoa</taxon>
        <taxon>Chordata</taxon>
        <taxon>Craniata</taxon>
        <taxon>Vertebrata</taxon>
        <taxon>Euteleostomi</taxon>
        <taxon>Mammalia</taxon>
        <taxon>Eutheria</taxon>
        <taxon>Euarchontoglires</taxon>
        <taxon>Glires</taxon>
        <taxon>Rodentia</taxon>
        <taxon>Sciuromorpha</taxon>
        <taxon>Sciuridae</taxon>
        <taxon>Sciurinae</taxon>
        <taxon>Pteromyini</taxon>
        <taxon>Glaucomys</taxon>
    </lineage>
</organism>
<keyword id="KW-0249">Electron transport</keyword>
<keyword id="KW-0349">Heme</keyword>
<keyword id="KW-0408">Iron</keyword>
<keyword id="KW-0472">Membrane</keyword>
<keyword id="KW-0479">Metal-binding</keyword>
<keyword id="KW-0496">Mitochondrion</keyword>
<keyword id="KW-0999">Mitochondrion inner membrane</keyword>
<keyword id="KW-0679">Respiratory chain</keyword>
<keyword id="KW-0812">Transmembrane</keyword>
<keyword id="KW-1133">Transmembrane helix</keyword>
<keyword id="KW-0813">Transport</keyword>
<keyword id="KW-0830">Ubiquinone</keyword>
<reference key="1">
    <citation type="submission" date="1999-06" db="EMBL/GenBank/DDBJ databases">
        <title>A molecular phylogeny of ground squirrels and prairie dogs.</title>
        <authorList>
            <person name="Harrison R.G."/>
            <person name="Sherman P.W."/>
            <person name="Yensen E."/>
            <person name="Hoffmann R.S."/>
            <person name="Bogdanowicz S.M."/>
        </authorList>
    </citation>
    <scope>NUCLEOTIDE SEQUENCE [GENOMIC DNA]</scope>
    <source>
        <strain>Isolate S73</strain>
    </source>
</reference>